<feature type="chain" id="PRO_0000452996" description="MFS-type transporter opaD">
    <location>
        <begin position="1"/>
        <end position="587"/>
    </location>
</feature>
<feature type="transmembrane region" description="Helical" evidence="1">
    <location>
        <begin position="87"/>
        <end position="107"/>
    </location>
</feature>
<feature type="transmembrane region" description="Helical" evidence="1">
    <location>
        <begin position="124"/>
        <end position="146"/>
    </location>
</feature>
<feature type="transmembrane region" description="Helical" evidence="1">
    <location>
        <begin position="153"/>
        <end position="173"/>
    </location>
</feature>
<feature type="transmembrane region" description="Helical" evidence="1">
    <location>
        <begin position="184"/>
        <end position="204"/>
    </location>
</feature>
<feature type="transmembrane region" description="Helical" evidence="1">
    <location>
        <begin position="214"/>
        <end position="234"/>
    </location>
</feature>
<feature type="transmembrane region" description="Helical" evidence="1">
    <location>
        <begin position="242"/>
        <end position="262"/>
    </location>
</feature>
<feature type="transmembrane region" description="Helical" evidence="1">
    <location>
        <begin position="284"/>
        <end position="304"/>
    </location>
</feature>
<feature type="transmembrane region" description="Helical" evidence="1">
    <location>
        <begin position="315"/>
        <end position="335"/>
    </location>
</feature>
<feature type="transmembrane region" description="Helical" evidence="1">
    <location>
        <begin position="357"/>
        <end position="377"/>
    </location>
</feature>
<feature type="transmembrane region" description="Helical" evidence="1">
    <location>
        <begin position="393"/>
        <end position="413"/>
    </location>
</feature>
<feature type="transmembrane region" description="Helical" evidence="1">
    <location>
        <begin position="414"/>
        <end position="434"/>
    </location>
</feature>
<feature type="transmembrane region" description="Helical" evidence="1">
    <location>
        <begin position="447"/>
        <end position="467"/>
    </location>
</feature>
<feature type="transmembrane region" description="Helical" evidence="1">
    <location>
        <begin position="483"/>
        <end position="503"/>
    </location>
</feature>
<feature type="transmembrane region" description="Helical" evidence="1">
    <location>
        <begin position="554"/>
        <end position="574"/>
    </location>
</feature>
<feature type="glycosylation site" description="N-linked (GlcNAc...) asparagine" evidence="2">
    <location>
        <position position="382"/>
    </location>
</feature>
<gene>
    <name evidence="4" type="primary">opaD</name>
    <name type="ORF">HK57_00062</name>
</gene>
<reference key="1">
    <citation type="journal article" date="2015" name="PLoS ONE">
        <title>A genomics based discovery of secondary metabolite biosynthetic gene clusters in Aspergillus ustus.</title>
        <authorList>
            <person name="Pi B."/>
            <person name="Yu D."/>
            <person name="Dai F."/>
            <person name="Song X."/>
            <person name="Zhu C."/>
            <person name="Li H."/>
            <person name="Yu Y."/>
        </authorList>
    </citation>
    <scope>NUCLEOTIDE SEQUENCE [LARGE SCALE GENOMIC DNA]</scope>
    <scope>IDENTIFICATION</scope>
    <source>
        <strain>3.3904</strain>
    </source>
</reference>
<reference key="2">
    <citation type="journal article" date="2020" name="Nat. Commun.">
        <title>Oxepinamide F biosynthesis involves enzymatic D-aminoacyl epimerization, 3H-oxepin formation, and hydroxylation induced double bond migration.</title>
        <authorList>
            <person name="Zheng L."/>
            <person name="Wang H."/>
            <person name="Fan A."/>
            <person name="Li S.M."/>
        </authorList>
    </citation>
    <scope>FUNCTION</scope>
</reference>
<dbReference type="EMBL" id="JOMC01000153">
    <property type="protein sequence ID" value="KIA75455.1"/>
    <property type="molecule type" value="Genomic_DNA"/>
</dbReference>
<dbReference type="SMR" id="A0A0C1C354"/>
<dbReference type="GlyCosmos" id="A0A0C1C354">
    <property type="glycosylation" value="1 site, No reported glycans"/>
</dbReference>
<dbReference type="Proteomes" id="UP000053475">
    <property type="component" value="Unassembled WGS sequence"/>
</dbReference>
<dbReference type="GO" id="GO:0005886">
    <property type="term" value="C:plasma membrane"/>
    <property type="evidence" value="ECO:0007669"/>
    <property type="project" value="TreeGrafter"/>
</dbReference>
<dbReference type="GO" id="GO:0022857">
    <property type="term" value="F:transmembrane transporter activity"/>
    <property type="evidence" value="ECO:0007669"/>
    <property type="project" value="InterPro"/>
</dbReference>
<dbReference type="CDD" id="cd17502">
    <property type="entry name" value="MFS_Azr1_MDR_like"/>
    <property type="match status" value="1"/>
</dbReference>
<dbReference type="FunFam" id="1.20.1250.20:FF:000196">
    <property type="entry name" value="MFS toxin efflux pump (AflT)"/>
    <property type="match status" value="1"/>
</dbReference>
<dbReference type="FunFam" id="1.20.1720.10:FF:000012">
    <property type="entry name" value="MFS toxin efflux pump (AflT)"/>
    <property type="match status" value="1"/>
</dbReference>
<dbReference type="Gene3D" id="1.20.1250.20">
    <property type="entry name" value="MFS general substrate transporter like domains"/>
    <property type="match status" value="1"/>
</dbReference>
<dbReference type="Gene3D" id="1.20.1720.10">
    <property type="entry name" value="Multidrug resistance protein D"/>
    <property type="match status" value="1"/>
</dbReference>
<dbReference type="InterPro" id="IPR011701">
    <property type="entry name" value="MFS"/>
</dbReference>
<dbReference type="InterPro" id="IPR020846">
    <property type="entry name" value="MFS_dom"/>
</dbReference>
<dbReference type="InterPro" id="IPR036259">
    <property type="entry name" value="MFS_trans_sf"/>
</dbReference>
<dbReference type="PANTHER" id="PTHR23501">
    <property type="entry name" value="MAJOR FACILITATOR SUPERFAMILY"/>
    <property type="match status" value="1"/>
</dbReference>
<dbReference type="PANTHER" id="PTHR23501:SF199">
    <property type="entry name" value="MFS EFFLUX TRANSPORTER INPD-RELATED"/>
    <property type="match status" value="1"/>
</dbReference>
<dbReference type="Pfam" id="PF07690">
    <property type="entry name" value="MFS_1"/>
    <property type="match status" value="1"/>
</dbReference>
<dbReference type="SUPFAM" id="SSF103473">
    <property type="entry name" value="MFS general substrate transporter"/>
    <property type="match status" value="1"/>
</dbReference>
<dbReference type="PROSITE" id="PS50850">
    <property type="entry name" value="MFS"/>
    <property type="match status" value="1"/>
</dbReference>
<name>OPAD_ASPUT</name>
<evidence type="ECO:0000255" key="1"/>
<evidence type="ECO:0000255" key="2">
    <source>
        <dbReference type="PROSITE-ProRule" id="PRU00498"/>
    </source>
</evidence>
<evidence type="ECO:0000269" key="3">
    <source>
    </source>
</evidence>
<evidence type="ECO:0000303" key="4">
    <source>
    </source>
</evidence>
<evidence type="ECO:0000305" key="5"/>
<organism>
    <name type="scientific">Aspergillus ustus</name>
    <dbReference type="NCBI Taxonomy" id="40382"/>
    <lineage>
        <taxon>Eukaryota</taxon>
        <taxon>Fungi</taxon>
        <taxon>Dikarya</taxon>
        <taxon>Ascomycota</taxon>
        <taxon>Pezizomycotina</taxon>
        <taxon>Eurotiomycetes</taxon>
        <taxon>Eurotiomycetidae</taxon>
        <taxon>Eurotiales</taxon>
        <taxon>Aspergillaceae</taxon>
        <taxon>Aspergillus</taxon>
        <taxon>Aspergillus subgen. Nidulantes</taxon>
    </lineage>
</organism>
<accession>A0A0C1C354</accession>
<proteinExistence type="inferred from homology"/>
<keyword id="KW-0325">Glycoprotein</keyword>
<keyword id="KW-0472">Membrane</keyword>
<keyword id="KW-1185">Reference proteome</keyword>
<keyword id="KW-0812">Transmembrane</keyword>
<keyword id="KW-1133">Transmembrane helix</keyword>
<keyword id="KW-0813">Transport</keyword>
<comment type="function">
    <text evidence="3">MFS-type transporter; part of the gene cluster that mediates the biosynthesis of oxepinamides, derivatives of anthranilyl-containing tripeptides that share an oxepin ring and a fused pyrimidinone moiety.</text>
</comment>
<comment type="subcellular location">
    <subcellularLocation>
        <location evidence="1">Membrane</location>
        <topology evidence="1">Multi-pass membrane protein</topology>
    </subcellularLocation>
</comment>
<comment type="similarity">
    <text evidence="5">Belongs to the major facilitator superfamily. TCR/Tet family.</text>
</comment>
<sequence length="587" mass="63189">MARKFGRRFRRNSRASLPSLKFLTLGSTDSVFGPHNQQHREEEANAPQEIALKPVEENVQTLLGSEGDVECRAPPQQQDYAPTWKCVAIMIALCLAVLCMALDNTILATAIPKITEEFNSVHDMGWYVSAYMLAQSSMTLVYGKLLTYYTVKWVYIAALLLFEGGSLICGVSPNSIALIIGRAISGTGGSGILVSSFLIVTIIVPVEKRPLYNGILSSLYAISGVFGPLLGGAFTDYATWRWCFYINLPVGGVTGFFILLLFRADKPTKQWPTGAVSQLLELDIIGLFLFIPALVSLLLVLQWGGSKYPWDDAHIIALIAVFGVTILAFAAVEYWQQDRATIPPSMIRNRDIWGSLLFTFCLSGSVIIFNYYLPIWFQSIKNASATMSGVMNIPLILAVALTSILSGWAVTTLGYYIPFMYATPVIASVGAGLLSTFKVSSAHPAWIGFQILYGIGVGLGFGLPLVVVQATLTAHTISSGTALVTLTQGLAGALFNFVAQSVFQTKLVQALFAEAPSLDAGKIAEAGATVVRDIVDPDMVPAVLRAYNYAITRVYLVGAALAAAALLGVVPIRWGSVKGKKIEAGAA</sequence>
<protein>
    <recommendedName>
        <fullName evidence="4">MFS-type transporter opaD</fullName>
    </recommendedName>
    <alternativeName>
        <fullName evidence="4">Oxepinamide F biosynthesis cluster protein D</fullName>
    </alternativeName>
</protein>